<dbReference type="EC" id="3.5.4.16" evidence="1"/>
<dbReference type="EMBL" id="CP000075">
    <property type="protein sequence ID" value="AAY37312.1"/>
    <property type="molecule type" value="Genomic_DNA"/>
</dbReference>
<dbReference type="RefSeq" id="WP_003408083.1">
    <property type="nucleotide sequence ID" value="NC_007005.1"/>
</dbReference>
<dbReference type="RefSeq" id="YP_235350.1">
    <property type="nucleotide sequence ID" value="NC_007005.1"/>
</dbReference>
<dbReference type="SMR" id="Q4ZU60"/>
<dbReference type="STRING" id="205918.Psyr_2269"/>
<dbReference type="KEGG" id="psb:Psyr_2269"/>
<dbReference type="PATRIC" id="fig|205918.7.peg.2320"/>
<dbReference type="eggNOG" id="COG1469">
    <property type="taxonomic scope" value="Bacteria"/>
</dbReference>
<dbReference type="HOGENOM" id="CLU_062816_0_0_6"/>
<dbReference type="OrthoDB" id="239637at2"/>
<dbReference type="UniPathway" id="UPA00848">
    <property type="reaction ID" value="UER00151"/>
</dbReference>
<dbReference type="Proteomes" id="UP000000426">
    <property type="component" value="Chromosome"/>
</dbReference>
<dbReference type="GO" id="GO:0003934">
    <property type="term" value="F:GTP cyclohydrolase I activity"/>
    <property type="evidence" value="ECO:0007669"/>
    <property type="project" value="UniProtKB-UniRule"/>
</dbReference>
<dbReference type="GO" id="GO:0046654">
    <property type="term" value="P:tetrahydrofolate biosynthetic process"/>
    <property type="evidence" value="ECO:0007669"/>
    <property type="project" value="UniProtKB-UniRule"/>
</dbReference>
<dbReference type="Gene3D" id="3.10.270.10">
    <property type="entry name" value="Urate Oxidase"/>
    <property type="match status" value="1"/>
</dbReference>
<dbReference type="HAMAP" id="MF_01527_B">
    <property type="entry name" value="GTP_cyclohydrol_B"/>
    <property type="match status" value="1"/>
</dbReference>
<dbReference type="InterPro" id="IPR022838">
    <property type="entry name" value="GTP_cyclohydrolase_FolE2"/>
</dbReference>
<dbReference type="InterPro" id="IPR003801">
    <property type="entry name" value="GTP_cyclohydrolase_FolE2/MptA"/>
</dbReference>
<dbReference type="NCBIfam" id="NF010200">
    <property type="entry name" value="PRK13674.1-1"/>
    <property type="match status" value="1"/>
</dbReference>
<dbReference type="PANTHER" id="PTHR36445">
    <property type="entry name" value="GTP CYCLOHYDROLASE MPTA"/>
    <property type="match status" value="1"/>
</dbReference>
<dbReference type="PANTHER" id="PTHR36445:SF1">
    <property type="entry name" value="GTP CYCLOHYDROLASE MPTA"/>
    <property type="match status" value="1"/>
</dbReference>
<dbReference type="Pfam" id="PF02649">
    <property type="entry name" value="GCHY-1"/>
    <property type="match status" value="1"/>
</dbReference>
<accession>Q4ZU60</accession>
<gene>
    <name evidence="1" type="primary">folE2</name>
    <name type="ordered locus">Psyr_2269</name>
</gene>
<reference key="1">
    <citation type="journal article" date="2005" name="Proc. Natl. Acad. Sci. U.S.A.">
        <title>Comparison of the complete genome sequences of Pseudomonas syringae pv. syringae B728a and pv. tomato DC3000.</title>
        <authorList>
            <person name="Feil H."/>
            <person name="Feil W.S."/>
            <person name="Chain P."/>
            <person name="Larimer F."/>
            <person name="Dibartolo G."/>
            <person name="Copeland A."/>
            <person name="Lykidis A."/>
            <person name="Trong S."/>
            <person name="Nolan M."/>
            <person name="Goltsman E."/>
            <person name="Thiel J."/>
            <person name="Malfatti S."/>
            <person name="Loper J.E."/>
            <person name="Lapidus A."/>
            <person name="Detter J.C."/>
            <person name="Land M."/>
            <person name="Richardson P.M."/>
            <person name="Kyrpides N.C."/>
            <person name="Ivanova N."/>
            <person name="Lindow S.E."/>
        </authorList>
    </citation>
    <scope>NUCLEOTIDE SEQUENCE [LARGE SCALE GENOMIC DNA]</scope>
    <source>
        <strain>B728a</strain>
    </source>
</reference>
<feature type="chain" id="PRO_0000289512" description="GTP cyclohydrolase FolE2">
    <location>
        <begin position="1"/>
        <end position="301"/>
    </location>
</feature>
<feature type="site" description="May be catalytically important" evidence="1">
    <location>
        <position position="156"/>
    </location>
</feature>
<organism>
    <name type="scientific">Pseudomonas syringae pv. syringae (strain B728a)</name>
    <dbReference type="NCBI Taxonomy" id="205918"/>
    <lineage>
        <taxon>Bacteria</taxon>
        <taxon>Pseudomonadati</taxon>
        <taxon>Pseudomonadota</taxon>
        <taxon>Gammaproteobacteria</taxon>
        <taxon>Pseudomonadales</taxon>
        <taxon>Pseudomonadaceae</taxon>
        <taxon>Pseudomonas</taxon>
        <taxon>Pseudomonas syringae</taxon>
    </lineage>
</organism>
<evidence type="ECO:0000255" key="1">
    <source>
        <dbReference type="HAMAP-Rule" id="MF_01527"/>
    </source>
</evidence>
<name>GCH4_PSEU2</name>
<comment type="function">
    <text evidence="1">Converts GTP to 7,8-dihydroneopterin triphosphate.</text>
</comment>
<comment type="catalytic activity">
    <reaction evidence="1">
        <text>GTP + H2O = 7,8-dihydroneopterin 3'-triphosphate + formate + H(+)</text>
        <dbReference type="Rhea" id="RHEA:17473"/>
        <dbReference type="ChEBI" id="CHEBI:15377"/>
        <dbReference type="ChEBI" id="CHEBI:15378"/>
        <dbReference type="ChEBI" id="CHEBI:15740"/>
        <dbReference type="ChEBI" id="CHEBI:37565"/>
        <dbReference type="ChEBI" id="CHEBI:58462"/>
        <dbReference type="EC" id="3.5.4.16"/>
    </reaction>
</comment>
<comment type="pathway">
    <text evidence="1">Cofactor biosynthesis; 7,8-dihydroneopterin triphosphate biosynthesis; 7,8-dihydroneopterin triphosphate from GTP: step 1/1.</text>
</comment>
<comment type="similarity">
    <text evidence="1">Belongs to the GTP cyclohydrolase IV family.</text>
</comment>
<proteinExistence type="inferred from homology"/>
<sequence length="301" mass="33019">MNKPLPDVALTEISPALVSLDWVGMQGVEVPIRLAEASIRHPVHAHVDLQVDLADPSVKGIHMSRLYRLLDGYAERQIVSPDTLAALLEAMVESHLDCHSSHARLTLSFNLLCRRPALITEGLSGWKSYPVKLDATWHAGRLCLDSSVDITYSSTCPCSAALSRQLLEEAFAARFGRQSFVDPMQVATWLRENASFATPHSQRSVATVQVRVAEQAAELGLMTLIDLVEQALGTPVQTAVKRADEQAFARLNGQNLMYVEDAARKVQQALEGRYAASSVSVRHFESLHPHDAAAQTSNYLS</sequence>
<keyword id="KW-0378">Hydrolase</keyword>
<protein>
    <recommendedName>
        <fullName evidence="1">GTP cyclohydrolase FolE2</fullName>
        <ecNumber evidence="1">3.5.4.16</ecNumber>
    </recommendedName>
</protein>